<evidence type="ECO:0000255" key="1">
    <source>
        <dbReference type="HAMAP-Rule" id="MF_00394"/>
    </source>
</evidence>
<dbReference type="EC" id="1.1.1.94" evidence="1"/>
<dbReference type="EMBL" id="CP000923">
    <property type="protein sequence ID" value="ABY93253.1"/>
    <property type="molecule type" value="Genomic_DNA"/>
</dbReference>
<dbReference type="RefSeq" id="WP_009052530.1">
    <property type="nucleotide sequence ID" value="NC_010320.1"/>
</dbReference>
<dbReference type="SMR" id="B0K3E2"/>
<dbReference type="KEGG" id="tex:Teth514_1981"/>
<dbReference type="HOGENOM" id="CLU_033449_0_2_9"/>
<dbReference type="UniPathway" id="UPA00940"/>
<dbReference type="Proteomes" id="UP000002155">
    <property type="component" value="Chromosome"/>
</dbReference>
<dbReference type="GO" id="GO:0005829">
    <property type="term" value="C:cytosol"/>
    <property type="evidence" value="ECO:0007669"/>
    <property type="project" value="TreeGrafter"/>
</dbReference>
<dbReference type="GO" id="GO:0047952">
    <property type="term" value="F:glycerol-3-phosphate dehydrogenase [NAD(P)+] activity"/>
    <property type="evidence" value="ECO:0007669"/>
    <property type="project" value="UniProtKB-UniRule"/>
</dbReference>
<dbReference type="GO" id="GO:0051287">
    <property type="term" value="F:NAD binding"/>
    <property type="evidence" value="ECO:0007669"/>
    <property type="project" value="InterPro"/>
</dbReference>
<dbReference type="GO" id="GO:0005975">
    <property type="term" value="P:carbohydrate metabolic process"/>
    <property type="evidence" value="ECO:0007669"/>
    <property type="project" value="InterPro"/>
</dbReference>
<dbReference type="GO" id="GO:0046167">
    <property type="term" value="P:glycerol-3-phosphate biosynthetic process"/>
    <property type="evidence" value="ECO:0007669"/>
    <property type="project" value="UniProtKB-UniRule"/>
</dbReference>
<dbReference type="GO" id="GO:0046168">
    <property type="term" value="P:glycerol-3-phosphate catabolic process"/>
    <property type="evidence" value="ECO:0007669"/>
    <property type="project" value="InterPro"/>
</dbReference>
<dbReference type="GO" id="GO:0006650">
    <property type="term" value="P:glycerophospholipid metabolic process"/>
    <property type="evidence" value="ECO:0007669"/>
    <property type="project" value="UniProtKB-UniRule"/>
</dbReference>
<dbReference type="GO" id="GO:0008654">
    <property type="term" value="P:phospholipid biosynthetic process"/>
    <property type="evidence" value="ECO:0007669"/>
    <property type="project" value="UniProtKB-KW"/>
</dbReference>
<dbReference type="FunFam" id="1.10.1040.10:FF:000001">
    <property type="entry name" value="Glycerol-3-phosphate dehydrogenase [NAD(P)+]"/>
    <property type="match status" value="1"/>
</dbReference>
<dbReference type="FunFam" id="3.40.50.720:FF:000019">
    <property type="entry name" value="Glycerol-3-phosphate dehydrogenase [NAD(P)+]"/>
    <property type="match status" value="1"/>
</dbReference>
<dbReference type="Gene3D" id="1.10.1040.10">
    <property type="entry name" value="N-(1-d-carboxylethyl)-l-norvaline Dehydrogenase, domain 2"/>
    <property type="match status" value="1"/>
</dbReference>
<dbReference type="Gene3D" id="3.40.50.720">
    <property type="entry name" value="NAD(P)-binding Rossmann-like Domain"/>
    <property type="match status" value="1"/>
</dbReference>
<dbReference type="HAMAP" id="MF_00394">
    <property type="entry name" value="NAD_Glyc3P_dehydrog"/>
    <property type="match status" value="1"/>
</dbReference>
<dbReference type="InterPro" id="IPR008927">
    <property type="entry name" value="6-PGluconate_DH-like_C_sf"/>
</dbReference>
<dbReference type="InterPro" id="IPR013328">
    <property type="entry name" value="6PGD_dom2"/>
</dbReference>
<dbReference type="InterPro" id="IPR006168">
    <property type="entry name" value="G3P_DH_NAD-dep"/>
</dbReference>
<dbReference type="InterPro" id="IPR006109">
    <property type="entry name" value="G3P_DH_NAD-dep_C"/>
</dbReference>
<dbReference type="InterPro" id="IPR011128">
    <property type="entry name" value="G3P_DH_NAD-dep_N"/>
</dbReference>
<dbReference type="InterPro" id="IPR036291">
    <property type="entry name" value="NAD(P)-bd_dom_sf"/>
</dbReference>
<dbReference type="NCBIfam" id="NF000940">
    <property type="entry name" value="PRK00094.1-2"/>
    <property type="match status" value="1"/>
</dbReference>
<dbReference type="NCBIfam" id="NF000941">
    <property type="entry name" value="PRK00094.1-3"/>
    <property type="match status" value="1"/>
</dbReference>
<dbReference type="NCBIfam" id="NF000942">
    <property type="entry name" value="PRK00094.1-4"/>
    <property type="match status" value="1"/>
</dbReference>
<dbReference type="PANTHER" id="PTHR11728">
    <property type="entry name" value="GLYCEROL-3-PHOSPHATE DEHYDROGENASE"/>
    <property type="match status" value="1"/>
</dbReference>
<dbReference type="PANTHER" id="PTHR11728:SF1">
    <property type="entry name" value="GLYCEROL-3-PHOSPHATE DEHYDROGENASE [NAD(+)] 2, CHLOROPLASTIC"/>
    <property type="match status" value="1"/>
</dbReference>
<dbReference type="Pfam" id="PF07479">
    <property type="entry name" value="NAD_Gly3P_dh_C"/>
    <property type="match status" value="1"/>
</dbReference>
<dbReference type="Pfam" id="PF01210">
    <property type="entry name" value="NAD_Gly3P_dh_N"/>
    <property type="match status" value="1"/>
</dbReference>
<dbReference type="PIRSF" id="PIRSF000114">
    <property type="entry name" value="Glycerol-3-P_dh"/>
    <property type="match status" value="1"/>
</dbReference>
<dbReference type="PRINTS" id="PR00077">
    <property type="entry name" value="GPDHDRGNASE"/>
</dbReference>
<dbReference type="SUPFAM" id="SSF48179">
    <property type="entry name" value="6-phosphogluconate dehydrogenase C-terminal domain-like"/>
    <property type="match status" value="1"/>
</dbReference>
<dbReference type="SUPFAM" id="SSF51735">
    <property type="entry name" value="NAD(P)-binding Rossmann-fold domains"/>
    <property type="match status" value="1"/>
</dbReference>
<dbReference type="PROSITE" id="PS00957">
    <property type="entry name" value="NAD_G3PDH"/>
    <property type="match status" value="1"/>
</dbReference>
<feature type="chain" id="PRO_1000123200" description="Glycerol-3-phosphate dehydrogenase [NAD(P)+]">
    <location>
        <begin position="1"/>
        <end position="330"/>
    </location>
</feature>
<feature type="active site" description="Proton acceptor" evidence="1">
    <location>
        <position position="186"/>
    </location>
</feature>
<feature type="binding site" evidence="1">
    <location>
        <position position="10"/>
    </location>
    <ligand>
        <name>NADPH</name>
        <dbReference type="ChEBI" id="CHEBI:57783"/>
    </ligand>
</feature>
<feature type="binding site" evidence="1">
    <location>
        <position position="11"/>
    </location>
    <ligand>
        <name>NADPH</name>
        <dbReference type="ChEBI" id="CHEBI:57783"/>
    </ligand>
</feature>
<feature type="binding site" evidence="1">
    <location>
        <position position="31"/>
    </location>
    <ligand>
        <name>NADPH</name>
        <dbReference type="ChEBI" id="CHEBI:57783"/>
    </ligand>
</feature>
<feature type="binding site" evidence="1">
    <location>
        <position position="104"/>
    </location>
    <ligand>
        <name>NADPH</name>
        <dbReference type="ChEBI" id="CHEBI:57783"/>
    </ligand>
</feature>
<feature type="binding site" evidence="1">
    <location>
        <position position="104"/>
    </location>
    <ligand>
        <name>sn-glycerol 3-phosphate</name>
        <dbReference type="ChEBI" id="CHEBI:57597"/>
    </ligand>
</feature>
<feature type="binding site" evidence="1">
    <location>
        <position position="131"/>
    </location>
    <ligand>
        <name>sn-glycerol 3-phosphate</name>
        <dbReference type="ChEBI" id="CHEBI:57597"/>
    </ligand>
</feature>
<feature type="binding site" evidence="1">
    <location>
        <position position="133"/>
    </location>
    <ligand>
        <name>sn-glycerol 3-phosphate</name>
        <dbReference type="ChEBI" id="CHEBI:57597"/>
    </ligand>
</feature>
<feature type="binding site" evidence="1">
    <location>
        <position position="135"/>
    </location>
    <ligand>
        <name>NADPH</name>
        <dbReference type="ChEBI" id="CHEBI:57783"/>
    </ligand>
</feature>
<feature type="binding site" evidence="1">
    <location>
        <position position="186"/>
    </location>
    <ligand>
        <name>sn-glycerol 3-phosphate</name>
        <dbReference type="ChEBI" id="CHEBI:57597"/>
    </ligand>
</feature>
<feature type="binding site" evidence="1">
    <location>
        <position position="239"/>
    </location>
    <ligand>
        <name>sn-glycerol 3-phosphate</name>
        <dbReference type="ChEBI" id="CHEBI:57597"/>
    </ligand>
</feature>
<feature type="binding site" evidence="1">
    <location>
        <position position="249"/>
    </location>
    <ligand>
        <name>sn-glycerol 3-phosphate</name>
        <dbReference type="ChEBI" id="CHEBI:57597"/>
    </ligand>
</feature>
<feature type="binding site" evidence="1">
    <location>
        <position position="250"/>
    </location>
    <ligand>
        <name>NADPH</name>
        <dbReference type="ChEBI" id="CHEBI:57783"/>
    </ligand>
</feature>
<feature type="binding site" evidence="1">
    <location>
        <position position="250"/>
    </location>
    <ligand>
        <name>sn-glycerol 3-phosphate</name>
        <dbReference type="ChEBI" id="CHEBI:57597"/>
    </ligand>
</feature>
<feature type="binding site" evidence="1">
    <location>
        <position position="251"/>
    </location>
    <ligand>
        <name>sn-glycerol 3-phosphate</name>
        <dbReference type="ChEBI" id="CHEBI:57597"/>
    </ligand>
</feature>
<feature type="binding site" evidence="1">
    <location>
        <position position="274"/>
    </location>
    <ligand>
        <name>NADPH</name>
        <dbReference type="ChEBI" id="CHEBI:57783"/>
    </ligand>
</feature>
<feature type="binding site" evidence="1">
    <location>
        <position position="276"/>
    </location>
    <ligand>
        <name>NADPH</name>
        <dbReference type="ChEBI" id="CHEBI:57783"/>
    </ligand>
</feature>
<name>GPDA_THEPX</name>
<keyword id="KW-0963">Cytoplasm</keyword>
<keyword id="KW-0444">Lipid biosynthesis</keyword>
<keyword id="KW-0443">Lipid metabolism</keyword>
<keyword id="KW-0520">NAD</keyword>
<keyword id="KW-0521">NADP</keyword>
<keyword id="KW-0547">Nucleotide-binding</keyword>
<keyword id="KW-0560">Oxidoreductase</keyword>
<keyword id="KW-0594">Phospholipid biosynthesis</keyword>
<keyword id="KW-1208">Phospholipid metabolism</keyword>
<protein>
    <recommendedName>
        <fullName evidence="1">Glycerol-3-phosphate dehydrogenase [NAD(P)+]</fullName>
        <ecNumber evidence="1">1.1.1.94</ecNumber>
    </recommendedName>
    <alternativeName>
        <fullName evidence="1">NAD(P)(+)-dependent glycerol-3-phosphate dehydrogenase</fullName>
    </alternativeName>
    <alternativeName>
        <fullName evidence="1">NAD(P)H-dependent dihydroxyacetone-phosphate reductase</fullName>
    </alternativeName>
</protein>
<organism>
    <name type="scientific">Thermoanaerobacter sp. (strain X514)</name>
    <dbReference type="NCBI Taxonomy" id="399726"/>
    <lineage>
        <taxon>Bacteria</taxon>
        <taxon>Bacillati</taxon>
        <taxon>Bacillota</taxon>
        <taxon>Clostridia</taxon>
        <taxon>Thermoanaerobacterales</taxon>
        <taxon>Thermoanaerobacteraceae</taxon>
        <taxon>Thermoanaerobacter</taxon>
    </lineage>
</organism>
<proteinExistence type="inferred from homology"/>
<comment type="function">
    <text evidence="1">Catalyzes the reduction of the glycolytic intermediate dihydroxyacetone phosphate (DHAP) to sn-glycerol 3-phosphate (G3P), the key precursor for phospholipid synthesis.</text>
</comment>
<comment type="catalytic activity">
    <reaction evidence="1">
        <text>sn-glycerol 3-phosphate + NAD(+) = dihydroxyacetone phosphate + NADH + H(+)</text>
        <dbReference type="Rhea" id="RHEA:11092"/>
        <dbReference type="ChEBI" id="CHEBI:15378"/>
        <dbReference type="ChEBI" id="CHEBI:57540"/>
        <dbReference type="ChEBI" id="CHEBI:57597"/>
        <dbReference type="ChEBI" id="CHEBI:57642"/>
        <dbReference type="ChEBI" id="CHEBI:57945"/>
        <dbReference type="EC" id="1.1.1.94"/>
    </reaction>
    <physiologicalReaction direction="right-to-left" evidence="1">
        <dbReference type="Rhea" id="RHEA:11094"/>
    </physiologicalReaction>
</comment>
<comment type="catalytic activity">
    <reaction evidence="1">
        <text>sn-glycerol 3-phosphate + NADP(+) = dihydroxyacetone phosphate + NADPH + H(+)</text>
        <dbReference type="Rhea" id="RHEA:11096"/>
        <dbReference type="ChEBI" id="CHEBI:15378"/>
        <dbReference type="ChEBI" id="CHEBI:57597"/>
        <dbReference type="ChEBI" id="CHEBI:57642"/>
        <dbReference type="ChEBI" id="CHEBI:57783"/>
        <dbReference type="ChEBI" id="CHEBI:58349"/>
        <dbReference type="EC" id="1.1.1.94"/>
    </reaction>
    <physiologicalReaction direction="right-to-left" evidence="1">
        <dbReference type="Rhea" id="RHEA:11098"/>
    </physiologicalReaction>
</comment>
<comment type="pathway">
    <text evidence="1">Membrane lipid metabolism; glycerophospholipid metabolism.</text>
</comment>
<comment type="subcellular location">
    <subcellularLocation>
        <location evidence="1">Cytoplasm</location>
    </subcellularLocation>
</comment>
<comment type="similarity">
    <text evidence="1">Belongs to the NAD-dependent glycerol-3-phosphate dehydrogenase family.</text>
</comment>
<sequence>MKISVLGAGSWGTAIAIHLNRLGHQITLWLRDKNQFEEIVSTRHNKKYLDVDIPQEISITTDLKEAVTNSEIVVIAVPSHAVREISEKLKEVADKNFIVVNLAKGIETSTLKRMSEVIKEYLSNDVVVLSGPSHAEEVVRQIPTACVLASLNVKACEVVQDAFMDENFRLYINKDVVGVELGGSLKNIIALGAGISDGLGFGDNTKAALMTRGLAEITRLGVALGSDPLTFLGLAGVGDLIVTCTSMLSRNRRAGILIGKGKSLEEALKEIGMVVEGVNTTKSAYRLSQIHKIEMPITKEIYSILFEGKNPYEAVYSLMTRDKKHELHGI</sequence>
<accession>B0K3E2</accession>
<gene>
    <name evidence="1" type="primary">gpsA</name>
    <name type="ordered locus">Teth514_1981</name>
</gene>
<reference key="1">
    <citation type="submission" date="2008-01" db="EMBL/GenBank/DDBJ databases">
        <title>Complete sequence of Thermoanaerobacter sp. X514.</title>
        <authorList>
            <consortium name="US DOE Joint Genome Institute"/>
            <person name="Copeland A."/>
            <person name="Lucas S."/>
            <person name="Lapidus A."/>
            <person name="Barry K."/>
            <person name="Glavina del Rio T."/>
            <person name="Dalin E."/>
            <person name="Tice H."/>
            <person name="Pitluck S."/>
            <person name="Bruce D."/>
            <person name="Goodwin L."/>
            <person name="Saunders E."/>
            <person name="Brettin T."/>
            <person name="Detter J.C."/>
            <person name="Han C."/>
            <person name="Schmutz J."/>
            <person name="Larimer F."/>
            <person name="Land M."/>
            <person name="Hauser L."/>
            <person name="Kyrpides N."/>
            <person name="Kim E."/>
            <person name="Hemme C."/>
            <person name="Fields M.W."/>
            <person name="He Z."/>
            <person name="Zhou J."/>
            <person name="Richardson P."/>
        </authorList>
    </citation>
    <scope>NUCLEOTIDE SEQUENCE [LARGE SCALE GENOMIC DNA]</scope>
    <source>
        <strain>X514</strain>
    </source>
</reference>